<dbReference type="EMBL" id="AL021711">
    <property type="protein sequence ID" value="CAA16755.1"/>
    <property type="status" value="ALT_INIT"/>
    <property type="molecule type" value="Genomic_DNA"/>
</dbReference>
<dbReference type="EMBL" id="AL161549">
    <property type="protein sequence ID" value="CAB78900.1"/>
    <property type="status" value="ALT_INIT"/>
    <property type="molecule type" value="Genomic_DNA"/>
</dbReference>
<dbReference type="EMBL" id="CP002687">
    <property type="protein sequence ID" value="AEE84119.1"/>
    <property type="molecule type" value="Genomic_DNA"/>
</dbReference>
<dbReference type="EMBL" id="AK118401">
    <property type="protein sequence ID" value="BAC43010.1"/>
    <property type="molecule type" value="mRNA"/>
</dbReference>
<dbReference type="EMBL" id="BT004703">
    <property type="protein sequence ID" value="AAO42949.1"/>
    <property type="molecule type" value="mRNA"/>
</dbReference>
<dbReference type="PIR" id="T05035">
    <property type="entry name" value="T05035"/>
</dbReference>
<dbReference type="RefSeq" id="NP_193633.2">
    <property type="nucleotide sequence ID" value="NM_118016.4"/>
</dbReference>
<dbReference type="STRING" id="3702.Q8GX72"/>
<dbReference type="PaxDb" id="3702-AT4G18980.1"/>
<dbReference type="EnsemblPlants" id="AT4G18980.1">
    <property type="protein sequence ID" value="AT4G18980.1"/>
    <property type="gene ID" value="AT4G18980"/>
</dbReference>
<dbReference type="GeneID" id="827634"/>
<dbReference type="Gramene" id="AT4G18980.1">
    <property type="protein sequence ID" value="AT4G18980.1"/>
    <property type="gene ID" value="AT4G18980"/>
</dbReference>
<dbReference type="KEGG" id="ath:AT4G18980"/>
<dbReference type="Araport" id="AT4G18980"/>
<dbReference type="TAIR" id="AT4G18980">
    <property type="gene designation" value="ATS40-3"/>
</dbReference>
<dbReference type="HOGENOM" id="CLU_088831_2_0_1"/>
<dbReference type="InParanoid" id="Q8GX72"/>
<dbReference type="OMA" id="TIFQCTE"/>
<dbReference type="PRO" id="PR:Q8GX72"/>
<dbReference type="Proteomes" id="UP000006548">
    <property type="component" value="Chromosome 4"/>
</dbReference>
<dbReference type="ExpressionAtlas" id="Q8GX72">
    <property type="expression patterns" value="baseline and differential"/>
</dbReference>
<dbReference type="GO" id="GO:0005634">
    <property type="term" value="C:nucleus"/>
    <property type="evidence" value="ECO:0000314"/>
    <property type="project" value="UniProtKB"/>
</dbReference>
<dbReference type="GO" id="GO:0002215">
    <property type="term" value="P:defense response to nematode"/>
    <property type="evidence" value="ECO:0000314"/>
    <property type="project" value="UniProtKB"/>
</dbReference>
<dbReference type="GO" id="GO:0010150">
    <property type="term" value="P:leaf senescence"/>
    <property type="evidence" value="ECO:0000315"/>
    <property type="project" value="TAIR"/>
</dbReference>
<dbReference type="GO" id="GO:0010468">
    <property type="term" value="P:regulation of gene expression"/>
    <property type="evidence" value="ECO:0000315"/>
    <property type="project" value="UniProtKB"/>
</dbReference>
<dbReference type="GO" id="GO:0061062">
    <property type="term" value="P:regulation of nematode larval development"/>
    <property type="evidence" value="ECO:0000315"/>
    <property type="project" value="UniProtKB"/>
</dbReference>
<dbReference type="GO" id="GO:0009737">
    <property type="term" value="P:response to abscisic acid"/>
    <property type="evidence" value="ECO:0000270"/>
    <property type="project" value="UniProtKB"/>
</dbReference>
<dbReference type="GO" id="GO:0009646">
    <property type="term" value="P:response to absence of light"/>
    <property type="evidence" value="ECO:0000270"/>
    <property type="project" value="UniProtKB"/>
</dbReference>
<dbReference type="GO" id="GO:0009617">
    <property type="term" value="P:response to bacterium"/>
    <property type="evidence" value="ECO:0000270"/>
    <property type="project" value="UniProtKB"/>
</dbReference>
<dbReference type="GO" id="GO:0009751">
    <property type="term" value="P:response to salicylic acid"/>
    <property type="evidence" value="ECO:0000270"/>
    <property type="project" value="UniProtKB"/>
</dbReference>
<dbReference type="InterPro" id="IPR007608">
    <property type="entry name" value="Senescence_reg_S40"/>
</dbReference>
<dbReference type="PANTHER" id="PTHR33083">
    <property type="entry name" value="EXPRESSED PROTEIN"/>
    <property type="match status" value="1"/>
</dbReference>
<dbReference type="PANTHER" id="PTHR33083:SF69">
    <property type="entry name" value="PROTEIN S40-3"/>
    <property type="match status" value="1"/>
</dbReference>
<dbReference type="Pfam" id="PF04520">
    <property type="entry name" value="Senescence_reg"/>
    <property type="match status" value="1"/>
</dbReference>
<keyword id="KW-0539">Nucleus</keyword>
<keyword id="KW-0611">Plant defense</keyword>
<keyword id="KW-1185">Reference proteome</keyword>
<feature type="chain" id="PRO_0000457291" description="Protein S40-3">
    <location>
        <begin position="1"/>
        <end position="106"/>
    </location>
</feature>
<feature type="region of interest" description="Disordered" evidence="1">
    <location>
        <begin position="1"/>
        <end position="65"/>
    </location>
</feature>
<feature type="compositionally biased region" description="Basic and acidic residues" evidence="1">
    <location>
        <begin position="16"/>
        <end position="41"/>
    </location>
</feature>
<comment type="function">
    <text evidence="2 3">Regulates senescence either by modulating WRKY53 or by activating SAG12 (PubMed:20238146). Affects the natural variation of cyst nematodes sex ratio and susceptibility to parasitic nematodes, depending on single nucleotide polymorphism (SNPs) between cultivars (PubMed:29378065).</text>
</comment>
<comment type="subcellular location">
    <subcellularLocation>
        <location evidence="2">Nucleus</location>
    </subcellularLocation>
</comment>
<comment type="developmental stage">
    <text evidence="2">Accumulates during senescence.</text>
</comment>
<comment type="induction">
    <text evidence="2">Induced by dark, abscisic acid (ABA) and salicylic acid (SA) (PubMed:20238146). Triggered by pathogen attack such as Pseudomonas syringae pv. Tomato DC3000 (PubMed:20238146).</text>
</comment>
<comment type="disruption phenotype">
    <text evidence="2 3">The s40-3a mutant, with low but constitutive S40-3 levels, exhibits a staygreen phenotype and delayed senescence associated with a reduced expression of WRKY53, SEN1 and SAG12 genes, especially at later stages of development (PubMed:20238146). Reduced cyst nematodes female/male sex ratio (PubMed:29378065).</text>
</comment>
<comment type="similarity">
    <text evidence="5">Belongs to the senescence regulator S40 family.</text>
</comment>
<comment type="sequence caution" evidence="5">
    <conflict type="erroneous initiation">
        <sequence resource="EMBL-CDS" id="CAA16755"/>
    </conflict>
    <text>Extended N-terminus.</text>
</comment>
<comment type="sequence caution" evidence="5">
    <conflict type="erroneous initiation">
        <sequence resource="EMBL-CDS" id="CAB78900"/>
    </conflict>
    <text>Extended N-terminus.</text>
</comment>
<sequence length="106" mass="12517">MSEEFQESEVIFSDESFTRKDNKISHNNENYERKSTEKDKISSPVRIPSRTTIRYTEEEGEMTPPHVIIEKRRTEAQMAFSFCTLKGRDLSRHRNTVLRMTGFLEV</sequence>
<evidence type="ECO:0000256" key="1">
    <source>
        <dbReference type="SAM" id="MobiDB-lite"/>
    </source>
</evidence>
<evidence type="ECO:0000269" key="2">
    <source>
    </source>
</evidence>
<evidence type="ECO:0000269" key="3">
    <source>
    </source>
</evidence>
<evidence type="ECO:0000303" key="4">
    <source>
    </source>
</evidence>
<evidence type="ECO:0000305" key="5"/>
<evidence type="ECO:0000312" key="6">
    <source>
        <dbReference type="Araport" id="AT4G18980"/>
    </source>
</evidence>
<evidence type="ECO:0000312" key="7">
    <source>
        <dbReference type="EMBL" id="CAA16755.1"/>
    </source>
</evidence>
<gene>
    <name evidence="4" type="primary">S40-3</name>
    <name evidence="6" type="ordered locus">At4g18980</name>
    <name evidence="7" type="ORF">F13C5.150</name>
</gene>
<organism>
    <name type="scientific">Arabidopsis thaliana</name>
    <name type="common">Mouse-ear cress</name>
    <dbReference type="NCBI Taxonomy" id="3702"/>
    <lineage>
        <taxon>Eukaryota</taxon>
        <taxon>Viridiplantae</taxon>
        <taxon>Streptophyta</taxon>
        <taxon>Embryophyta</taxon>
        <taxon>Tracheophyta</taxon>
        <taxon>Spermatophyta</taxon>
        <taxon>Magnoliopsida</taxon>
        <taxon>eudicotyledons</taxon>
        <taxon>Gunneridae</taxon>
        <taxon>Pentapetalae</taxon>
        <taxon>rosids</taxon>
        <taxon>malvids</taxon>
        <taxon>Brassicales</taxon>
        <taxon>Brassicaceae</taxon>
        <taxon>Camelineae</taxon>
        <taxon>Arabidopsis</taxon>
    </lineage>
</organism>
<proteinExistence type="evidence at transcript level"/>
<protein>
    <recommendedName>
        <fullName evidence="4">Protein S40-3</fullName>
        <shortName evidence="4">AtS40-3</shortName>
    </recommendedName>
</protein>
<reference key="1">
    <citation type="journal article" date="1999" name="Nature">
        <title>Sequence and analysis of chromosome 4 of the plant Arabidopsis thaliana.</title>
        <authorList>
            <person name="Mayer K.F.X."/>
            <person name="Schueller C."/>
            <person name="Wambutt R."/>
            <person name="Murphy G."/>
            <person name="Volckaert G."/>
            <person name="Pohl T."/>
            <person name="Duesterhoeft A."/>
            <person name="Stiekema W."/>
            <person name="Entian K.-D."/>
            <person name="Terryn N."/>
            <person name="Harris B."/>
            <person name="Ansorge W."/>
            <person name="Brandt P."/>
            <person name="Grivell L.A."/>
            <person name="Rieger M."/>
            <person name="Weichselgartner M."/>
            <person name="de Simone V."/>
            <person name="Obermaier B."/>
            <person name="Mache R."/>
            <person name="Mueller M."/>
            <person name="Kreis M."/>
            <person name="Delseny M."/>
            <person name="Puigdomenech P."/>
            <person name="Watson M."/>
            <person name="Schmidtheini T."/>
            <person name="Reichert B."/>
            <person name="Portetelle D."/>
            <person name="Perez-Alonso M."/>
            <person name="Boutry M."/>
            <person name="Bancroft I."/>
            <person name="Vos P."/>
            <person name="Hoheisel J."/>
            <person name="Zimmermann W."/>
            <person name="Wedler H."/>
            <person name="Ridley P."/>
            <person name="Langham S.-A."/>
            <person name="McCullagh B."/>
            <person name="Bilham L."/>
            <person name="Robben J."/>
            <person name="van der Schueren J."/>
            <person name="Grymonprez B."/>
            <person name="Chuang Y.-J."/>
            <person name="Vandenbussche F."/>
            <person name="Braeken M."/>
            <person name="Weltjens I."/>
            <person name="Voet M."/>
            <person name="Bastiaens I."/>
            <person name="Aert R."/>
            <person name="Defoor E."/>
            <person name="Weitzenegger T."/>
            <person name="Bothe G."/>
            <person name="Ramsperger U."/>
            <person name="Hilbert H."/>
            <person name="Braun M."/>
            <person name="Holzer E."/>
            <person name="Brandt A."/>
            <person name="Peters S."/>
            <person name="van Staveren M."/>
            <person name="Dirkse W."/>
            <person name="Mooijman P."/>
            <person name="Klein Lankhorst R."/>
            <person name="Rose M."/>
            <person name="Hauf J."/>
            <person name="Koetter P."/>
            <person name="Berneiser S."/>
            <person name="Hempel S."/>
            <person name="Feldpausch M."/>
            <person name="Lamberth S."/>
            <person name="Van den Daele H."/>
            <person name="De Keyser A."/>
            <person name="Buysshaert C."/>
            <person name="Gielen J."/>
            <person name="Villarroel R."/>
            <person name="De Clercq R."/>
            <person name="van Montagu M."/>
            <person name="Rogers J."/>
            <person name="Cronin A."/>
            <person name="Quail M.A."/>
            <person name="Bray-Allen S."/>
            <person name="Clark L."/>
            <person name="Doggett J."/>
            <person name="Hall S."/>
            <person name="Kay M."/>
            <person name="Lennard N."/>
            <person name="McLay K."/>
            <person name="Mayes R."/>
            <person name="Pettett A."/>
            <person name="Rajandream M.A."/>
            <person name="Lyne M."/>
            <person name="Benes V."/>
            <person name="Rechmann S."/>
            <person name="Borkova D."/>
            <person name="Bloecker H."/>
            <person name="Scharfe M."/>
            <person name="Grimm M."/>
            <person name="Loehnert T.-H."/>
            <person name="Dose S."/>
            <person name="de Haan M."/>
            <person name="Maarse A.C."/>
            <person name="Schaefer M."/>
            <person name="Mueller-Auer S."/>
            <person name="Gabel C."/>
            <person name="Fuchs M."/>
            <person name="Fartmann B."/>
            <person name="Granderath K."/>
            <person name="Dauner D."/>
            <person name="Herzl A."/>
            <person name="Neumann S."/>
            <person name="Argiriou A."/>
            <person name="Vitale D."/>
            <person name="Liguori R."/>
            <person name="Piravandi E."/>
            <person name="Massenet O."/>
            <person name="Quigley F."/>
            <person name="Clabauld G."/>
            <person name="Muendlein A."/>
            <person name="Felber R."/>
            <person name="Schnabl S."/>
            <person name="Hiller R."/>
            <person name="Schmidt W."/>
            <person name="Lecharny A."/>
            <person name="Aubourg S."/>
            <person name="Chefdor F."/>
            <person name="Cooke R."/>
            <person name="Berger C."/>
            <person name="Monfort A."/>
            <person name="Casacuberta E."/>
            <person name="Gibbons T."/>
            <person name="Weber N."/>
            <person name="Vandenbol M."/>
            <person name="Bargues M."/>
            <person name="Terol J."/>
            <person name="Torres A."/>
            <person name="Perez-Perez A."/>
            <person name="Purnelle B."/>
            <person name="Bent E."/>
            <person name="Johnson S."/>
            <person name="Tacon D."/>
            <person name="Jesse T."/>
            <person name="Heijnen L."/>
            <person name="Schwarz S."/>
            <person name="Scholler P."/>
            <person name="Heber S."/>
            <person name="Francs P."/>
            <person name="Bielke C."/>
            <person name="Frishman D."/>
            <person name="Haase D."/>
            <person name="Lemcke K."/>
            <person name="Mewes H.-W."/>
            <person name="Stocker S."/>
            <person name="Zaccaria P."/>
            <person name="Bevan M."/>
            <person name="Wilson R.K."/>
            <person name="de la Bastide M."/>
            <person name="Habermann K."/>
            <person name="Parnell L."/>
            <person name="Dedhia N."/>
            <person name="Gnoj L."/>
            <person name="Schutz K."/>
            <person name="Huang E."/>
            <person name="Spiegel L."/>
            <person name="Sekhon M."/>
            <person name="Murray J."/>
            <person name="Sheet P."/>
            <person name="Cordes M."/>
            <person name="Abu-Threideh J."/>
            <person name="Stoneking T."/>
            <person name="Kalicki J."/>
            <person name="Graves T."/>
            <person name="Harmon G."/>
            <person name="Edwards J."/>
            <person name="Latreille P."/>
            <person name="Courtney L."/>
            <person name="Cloud J."/>
            <person name="Abbott A."/>
            <person name="Scott K."/>
            <person name="Johnson D."/>
            <person name="Minx P."/>
            <person name="Bentley D."/>
            <person name="Fulton B."/>
            <person name="Miller N."/>
            <person name="Greco T."/>
            <person name="Kemp K."/>
            <person name="Kramer J."/>
            <person name="Fulton L."/>
            <person name="Mardis E."/>
            <person name="Dante M."/>
            <person name="Pepin K."/>
            <person name="Hillier L.W."/>
            <person name="Nelson J."/>
            <person name="Spieth J."/>
            <person name="Ryan E."/>
            <person name="Andrews S."/>
            <person name="Geisel C."/>
            <person name="Layman D."/>
            <person name="Du H."/>
            <person name="Ali J."/>
            <person name="Berghoff A."/>
            <person name="Jones K."/>
            <person name="Drone K."/>
            <person name="Cotton M."/>
            <person name="Joshu C."/>
            <person name="Antonoiu B."/>
            <person name="Zidanic M."/>
            <person name="Strong C."/>
            <person name="Sun H."/>
            <person name="Lamar B."/>
            <person name="Yordan C."/>
            <person name="Ma P."/>
            <person name="Zhong J."/>
            <person name="Preston R."/>
            <person name="Vil D."/>
            <person name="Shekher M."/>
            <person name="Matero A."/>
            <person name="Shah R."/>
            <person name="Swaby I.K."/>
            <person name="O'Shaughnessy A."/>
            <person name="Rodriguez M."/>
            <person name="Hoffman J."/>
            <person name="Till S."/>
            <person name="Granat S."/>
            <person name="Shohdy N."/>
            <person name="Hasegawa A."/>
            <person name="Hameed A."/>
            <person name="Lodhi M."/>
            <person name="Johnson A."/>
            <person name="Chen E."/>
            <person name="Marra M.A."/>
            <person name="Martienssen R."/>
            <person name="McCombie W.R."/>
        </authorList>
    </citation>
    <scope>NUCLEOTIDE SEQUENCE [LARGE SCALE GENOMIC DNA]</scope>
    <source>
        <strain>cv. Columbia</strain>
    </source>
</reference>
<reference key="2">
    <citation type="journal article" date="2017" name="Plant J.">
        <title>Araport11: a complete reannotation of the Arabidopsis thaliana reference genome.</title>
        <authorList>
            <person name="Cheng C.Y."/>
            <person name="Krishnakumar V."/>
            <person name="Chan A.P."/>
            <person name="Thibaud-Nissen F."/>
            <person name="Schobel S."/>
            <person name="Town C.D."/>
        </authorList>
    </citation>
    <scope>GENOME REANNOTATION</scope>
    <source>
        <strain>cv. Columbia</strain>
    </source>
</reference>
<reference key="3">
    <citation type="journal article" date="2002" name="Science">
        <title>Functional annotation of a full-length Arabidopsis cDNA collection.</title>
        <authorList>
            <person name="Seki M."/>
            <person name="Narusaka M."/>
            <person name="Kamiya A."/>
            <person name="Ishida J."/>
            <person name="Satou M."/>
            <person name="Sakurai T."/>
            <person name="Nakajima M."/>
            <person name="Enju A."/>
            <person name="Akiyama K."/>
            <person name="Oono Y."/>
            <person name="Muramatsu M."/>
            <person name="Hayashizaki Y."/>
            <person name="Kawai J."/>
            <person name="Carninci P."/>
            <person name="Itoh M."/>
            <person name="Ishii Y."/>
            <person name="Arakawa T."/>
            <person name="Shibata K."/>
            <person name="Shinagawa A."/>
            <person name="Shinozaki K."/>
        </authorList>
    </citation>
    <scope>NUCLEOTIDE SEQUENCE [LARGE SCALE MRNA]</scope>
    <source>
        <strain>cv. Columbia</strain>
    </source>
</reference>
<reference key="4">
    <citation type="journal article" date="2003" name="Science">
        <title>Empirical analysis of transcriptional activity in the Arabidopsis genome.</title>
        <authorList>
            <person name="Yamada K."/>
            <person name="Lim J."/>
            <person name="Dale J.M."/>
            <person name="Chen H."/>
            <person name="Shinn P."/>
            <person name="Palm C.J."/>
            <person name="Southwick A.M."/>
            <person name="Wu H.C."/>
            <person name="Kim C.J."/>
            <person name="Nguyen M."/>
            <person name="Pham P.K."/>
            <person name="Cheuk R.F."/>
            <person name="Karlin-Newmann G."/>
            <person name="Liu S.X."/>
            <person name="Lam B."/>
            <person name="Sakano H."/>
            <person name="Wu T."/>
            <person name="Yu G."/>
            <person name="Miranda M."/>
            <person name="Quach H.L."/>
            <person name="Tripp M."/>
            <person name="Chang C.H."/>
            <person name="Lee J.M."/>
            <person name="Toriumi M.J."/>
            <person name="Chan M.M."/>
            <person name="Tang C.C."/>
            <person name="Onodera C.S."/>
            <person name="Deng J.M."/>
            <person name="Akiyama K."/>
            <person name="Ansari Y."/>
            <person name="Arakawa T."/>
            <person name="Banh J."/>
            <person name="Banno F."/>
            <person name="Bowser L."/>
            <person name="Brooks S.Y."/>
            <person name="Carninci P."/>
            <person name="Chao Q."/>
            <person name="Choy N."/>
            <person name="Enju A."/>
            <person name="Goldsmith A.D."/>
            <person name="Gurjal M."/>
            <person name="Hansen N.F."/>
            <person name="Hayashizaki Y."/>
            <person name="Johnson-Hopson C."/>
            <person name="Hsuan V.W."/>
            <person name="Iida K."/>
            <person name="Karnes M."/>
            <person name="Khan S."/>
            <person name="Koesema E."/>
            <person name="Ishida J."/>
            <person name="Jiang P.X."/>
            <person name="Jones T."/>
            <person name="Kawai J."/>
            <person name="Kamiya A."/>
            <person name="Meyers C."/>
            <person name="Nakajima M."/>
            <person name="Narusaka M."/>
            <person name="Seki M."/>
            <person name="Sakurai T."/>
            <person name="Satou M."/>
            <person name="Tamse R."/>
            <person name="Vaysberg M."/>
            <person name="Wallender E.K."/>
            <person name="Wong C."/>
            <person name="Yamamura Y."/>
            <person name="Yuan S."/>
            <person name="Shinozaki K."/>
            <person name="Davis R.W."/>
            <person name="Theologis A."/>
            <person name="Ecker J.R."/>
        </authorList>
    </citation>
    <scope>NUCLEOTIDE SEQUENCE [LARGE SCALE MRNA]</scope>
    <source>
        <strain>cv. Columbia</strain>
    </source>
</reference>
<reference key="5">
    <citation type="journal article" date="2010" name="Plant Mol. Biol.">
        <title>Nuclear targeted AtS40 modulates senescence associated gene expression in Arabidopsis thaliana during natural development and in darkness.</title>
        <authorList>
            <person name="Fischer-Kilbienski I."/>
            <person name="Miao Y."/>
            <person name="Roitsch T."/>
            <person name="Zschiesche W."/>
            <person name="Humbeck K."/>
            <person name="Krupinska K."/>
        </authorList>
    </citation>
    <scope>FUNCTION</scope>
    <scope>DISRUPTION PHENOTYPE</scope>
    <scope>DEVELOPMENTAL STAGE</scope>
    <scope>INDUCTION BY DARK; ABSCISIC ACID; SALICYLIC ACID AND PATHOGENS</scope>
    <scope>SUBCELLULAR LOCATION</scope>
    <source>
        <strain>cv. Columbia</strain>
    </source>
</reference>
<reference key="6">
    <citation type="journal article" date="2018" name="J. Exp. Bot.">
        <title>Genome-wide association study uncovers a novel QTL allele of AtS40-3 that affects the sex ratio of cyst nematodes in Arabidopsis.</title>
        <authorList>
            <person name="Anwer M.A."/>
            <person name="Anjam M.S."/>
            <person name="Shah S.J."/>
            <person name="Hasan M.S."/>
            <person name="Naz A.A."/>
            <person name="Grundler F.M.W."/>
            <person name="Siddique S."/>
        </authorList>
    </citation>
    <scope>FUNCTION</scope>
    <scope>DISRUPTION PHENOTYPE</scope>
    <source>
        <strain>cv. Columbia</strain>
    </source>
</reference>
<name>S403_ARATH</name>
<accession>Q8GX72</accession>
<accession>O49411</accession>